<reference key="1">
    <citation type="journal article" date="2007" name="Mol. Biol. Evol.">
        <title>The complete chloroplast and mitochondrial DNA sequence of Ostreococcus tauri: organelle genomes of the smallest eukaryote are examples of compaction.</title>
        <authorList>
            <person name="Robbens S."/>
            <person name="Derelle E."/>
            <person name="Ferraz C."/>
            <person name="Wuyts J."/>
            <person name="Moreau H."/>
            <person name="Van de Peer Y."/>
        </authorList>
    </citation>
    <scope>NUCLEOTIDE SEQUENCE [LARGE SCALE GENOMIC DNA]</scope>
    <source>
        <strain>OTTH0595</strain>
    </source>
</reference>
<feature type="initiator methionine" description="Removed" evidence="1">
    <location>
        <position position="1"/>
    </location>
</feature>
<feature type="chain" id="PRO_0000275992" description="Photosystem I iron-sulfur center">
    <location>
        <begin position="2"/>
        <end position="81"/>
    </location>
</feature>
<feature type="domain" description="4Fe-4S ferredoxin-type 1" evidence="2">
    <location>
        <begin position="2"/>
        <end position="31"/>
    </location>
</feature>
<feature type="domain" description="4Fe-4S ferredoxin-type 2" evidence="2">
    <location>
        <begin position="39"/>
        <end position="68"/>
    </location>
</feature>
<feature type="binding site" evidence="2">
    <location>
        <position position="11"/>
    </location>
    <ligand>
        <name>[4Fe-4S] cluster</name>
        <dbReference type="ChEBI" id="CHEBI:49883"/>
        <label>1</label>
    </ligand>
</feature>
<feature type="binding site" evidence="2">
    <location>
        <position position="14"/>
    </location>
    <ligand>
        <name>[4Fe-4S] cluster</name>
        <dbReference type="ChEBI" id="CHEBI:49883"/>
        <label>1</label>
    </ligand>
</feature>
<feature type="binding site" evidence="2">
    <location>
        <position position="17"/>
    </location>
    <ligand>
        <name>[4Fe-4S] cluster</name>
        <dbReference type="ChEBI" id="CHEBI:49883"/>
        <label>1</label>
    </ligand>
</feature>
<feature type="binding site" evidence="2">
    <location>
        <position position="21"/>
    </location>
    <ligand>
        <name>[4Fe-4S] cluster</name>
        <dbReference type="ChEBI" id="CHEBI:49883"/>
        <label>2</label>
    </ligand>
</feature>
<feature type="binding site" evidence="2">
    <location>
        <position position="48"/>
    </location>
    <ligand>
        <name>[4Fe-4S] cluster</name>
        <dbReference type="ChEBI" id="CHEBI:49883"/>
        <label>2</label>
    </ligand>
</feature>
<feature type="binding site" evidence="2">
    <location>
        <position position="51"/>
    </location>
    <ligand>
        <name>[4Fe-4S] cluster</name>
        <dbReference type="ChEBI" id="CHEBI:49883"/>
        <label>2</label>
    </ligand>
</feature>
<feature type="binding site" evidence="2">
    <location>
        <position position="54"/>
    </location>
    <ligand>
        <name>[4Fe-4S] cluster</name>
        <dbReference type="ChEBI" id="CHEBI:49883"/>
        <label>2</label>
    </ligand>
</feature>
<feature type="binding site" evidence="2">
    <location>
        <position position="58"/>
    </location>
    <ligand>
        <name>[4Fe-4S] cluster</name>
        <dbReference type="ChEBI" id="CHEBI:49883"/>
        <label>1</label>
    </ligand>
</feature>
<feature type="strand" evidence="3">
    <location>
        <begin position="4"/>
        <end position="8"/>
    </location>
</feature>
<feature type="helix" evidence="3">
    <location>
        <begin position="16"/>
        <end position="20"/>
    </location>
</feature>
<feature type="strand" evidence="3">
    <location>
        <begin position="27"/>
        <end position="30"/>
    </location>
</feature>
<feature type="strand" evidence="3">
    <location>
        <begin position="32"/>
        <end position="41"/>
    </location>
</feature>
<feature type="helix" evidence="3">
    <location>
        <begin position="45"/>
        <end position="47"/>
    </location>
</feature>
<feature type="helix" evidence="3">
    <location>
        <begin position="53"/>
        <end position="57"/>
    </location>
</feature>
<feature type="strand" evidence="3">
    <location>
        <begin position="60"/>
        <end position="62"/>
    </location>
</feature>
<feature type="strand" evidence="3">
    <location>
        <begin position="64"/>
        <end position="68"/>
    </location>
</feature>
<feature type="helix" evidence="3">
    <location>
        <begin position="74"/>
        <end position="77"/>
    </location>
</feature>
<name>PSAC_OSTTA</name>
<keyword id="KW-0002">3D-structure</keyword>
<keyword id="KW-0004">4Fe-4S</keyword>
<keyword id="KW-0150">Chloroplast</keyword>
<keyword id="KW-0249">Electron transport</keyword>
<keyword id="KW-0408">Iron</keyword>
<keyword id="KW-0411">Iron-sulfur</keyword>
<keyword id="KW-0472">Membrane</keyword>
<keyword id="KW-0479">Metal-binding</keyword>
<keyword id="KW-0560">Oxidoreductase</keyword>
<keyword id="KW-0602">Photosynthesis</keyword>
<keyword id="KW-0603">Photosystem I</keyword>
<keyword id="KW-0934">Plastid</keyword>
<keyword id="KW-1185">Reference proteome</keyword>
<keyword id="KW-0677">Repeat</keyword>
<keyword id="KW-0793">Thylakoid</keyword>
<keyword id="KW-0813">Transport</keyword>
<dbReference type="EC" id="1.97.1.12" evidence="2"/>
<dbReference type="EMBL" id="CR954199">
    <property type="protein sequence ID" value="CAL36336.1"/>
    <property type="molecule type" value="Genomic_DNA"/>
</dbReference>
<dbReference type="RefSeq" id="YP_717214.1">
    <property type="nucleotide sequence ID" value="NC_008289.1"/>
</dbReference>
<dbReference type="PDB" id="7YCA">
    <property type="method" value="EM"/>
    <property type="resolution" value="2.94 A"/>
    <property type="chains" value="C=1-81"/>
</dbReference>
<dbReference type="PDBsum" id="7YCA"/>
<dbReference type="EMDB" id="EMD-33737"/>
<dbReference type="SMR" id="Q0P3P1"/>
<dbReference type="FunCoup" id="Q0P3P1">
    <property type="interactions" value="146"/>
</dbReference>
<dbReference type="STRING" id="70448.Q0P3P1"/>
<dbReference type="GeneID" id="4238875"/>
<dbReference type="KEGG" id="ota:OstapCp11"/>
<dbReference type="eggNOG" id="ENOG502S26M">
    <property type="taxonomic scope" value="Eukaryota"/>
</dbReference>
<dbReference type="InParanoid" id="Q0P3P1"/>
<dbReference type="Proteomes" id="UP000009170">
    <property type="component" value="Chloroplast"/>
</dbReference>
<dbReference type="GO" id="GO:0009535">
    <property type="term" value="C:chloroplast thylakoid membrane"/>
    <property type="evidence" value="ECO:0007669"/>
    <property type="project" value="UniProtKB-SubCell"/>
</dbReference>
<dbReference type="GO" id="GO:0009522">
    <property type="term" value="C:photosystem I"/>
    <property type="evidence" value="ECO:0007669"/>
    <property type="project" value="UniProtKB-KW"/>
</dbReference>
<dbReference type="GO" id="GO:0051539">
    <property type="term" value="F:4 iron, 4 sulfur cluster binding"/>
    <property type="evidence" value="ECO:0007669"/>
    <property type="project" value="UniProtKB-KW"/>
</dbReference>
<dbReference type="GO" id="GO:0009055">
    <property type="term" value="F:electron transfer activity"/>
    <property type="evidence" value="ECO:0007669"/>
    <property type="project" value="UniProtKB-UniRule"/>
</dbReference>
<dbReference type="GO" id="GO:0046872">
    <property type="term" value="F:metal ion binding"/>
    <property type="evidence" value="ECO:0007669"/>
    <property type="project" value="UniProtKB-KW"/>
</dbReference>
<dbReference type="GO" id="GO:0016491">
    <property type="term" value="F:oxidoreductase activity"/>
    <property type="evidence" value="ECO:0007669"/>
    <property type="project" value="UniProtKB-KW"/>
</dbReference>
<dbReference type="GO" id="GO:0009773">
    <property type="term" value="P:photosynthetic electron transport in photosystem I"/>
    <property type="evidence" value="ECO:0007669"/>
    <property type="project" value="InterPro"/>
</dbReference>
<dbReference type="FunFam" id="3.30.70.20:FF:000001">
    <property type="entry name" value="Photosystem I iron-sulfur center"/>
    <property type="match status" value="1"/>
</dbReference>
<dbReference type="Gene3D" id="3.30.70.20">
    <property type="match status" value="1"/>
</dbReference>
<dbReference type="HAMAP" id="MF_01303">
    <property type="entry name" value="PSI_PsaC"/>
    <property type="match status" value="1"/>
</dbReference>
<dbReference type="InterPro" id="IPR017896">
    <property type="entry name" value="4Fe4S_Fe-S-bd"/>
</dbReference>
<dbReference type="InterPro" id="IPR017900">
    <property type="entry name" value="4Fe4S_Fe_S_CS"/>
</dbReference>
<dbReference type="InterPro" id="IPR050157">
    <property type="entry name" value="PSI_iron-sulfur_center"/>
</dbReference>
<dbReference type="InterPro" id="IPR017491">
    <property type="entry name" value="PSI_PsaC"/>
</dbReference>
<dbReference type="NCBIfam" id="TIGR03048">
    <property type="entry name" value="PS_I_psaC"/>
    <property type="match status" value="1"/>
</dbReference>
<dbReference type="PANTHER" id="PTHR24960:SF79">
    <property type="entry name" value="PHOTOSYSTEM I IRON-SULFUR CENTER"/>
    <property type="match status" value="1"/>
</dbReference>
<dbReference type="PANTHER" id="PTHR24960">
    <property type="entry name" value="PHOTOSYSTEM I IRON-SULFUR CENTER-RELATED"/>
    <property type="match status" value="1"/>
</dbReference>
<dbReference type="Pfam" id="PF12838">
    <property type="entry name" value="Fer4_7"/>
    <property type="match status" value="1"/>
</dbReference>
<dbReference type="SUPFAM" id="SSF54862">
    <property type="entry name" value="4Fe-4S ferredoxins"/>
    <property type="match status" value="1"/>
</dbReference>
<dbReference type="PROSITE" id="PS00198">
    <property type="entry name" value="4FE4S_FER_1"/>
    <property type="match status" value="2"/>
</dbReference>
<dbReference type="PROSITE" id="PS51379">
    <property type="entry name" value="4FE4S_FER_2"/>
    <property type="match status" value="2"/>
</dbReference>
<geneLocation type="chloroplast"/>
<evidence type="ECO:0000250" key="1"/>
<evidence type="ECO:0000255" key="2">
    <source>
        <dbReference type="HAMAP-Rule" id="MF_01303"/>
    </source>
</evidence>
<evidence type="ECO:0007829" key="3">
    <source>
        <dbReference type="PDB" id="7YCA"/>
    </source>
</evidence>
<gene>
    <name evidence="2" type="primary">psaC</name>
    <name type="ordered locus">OtCpg00110</name>
</gene>
<sequence>MSHAVKIYDTCIGCTQCVRACPTDVLEMVPWDGCKAGQIASAPRTEDCVGCKRCEAACPTDFLSVRVYLGSETTRSMGLAY</sequence>
<comment type="function">
    <text evidence="2">Apoprotein for the two 4Fe-4S centers FA and FB of photosystem I (PSI); essential for photochemical activity. FB is the terminal electron acceptor of PSI, donating electrons to ferredoxin. The C-terminus interacts with PsaA/B/D and helps assemble the protein into the PSI complex. Required for binding of PsaD and PsaE to PSI. PSI is a plastocyanin/cytochrome c6-ferredoxin oxidoreductase, converting photonic excitation into a charge separation, which transfers an electron from the donor P700 chlorophyll pair to the spectroscopically characterized acceptors A0, A1, FX, FA and FB in turn.</text>
</comment>
<comment type="catalytic activity">
    <reaction evidence="2">
        <text>reduced [plastocyanin] + hnu + oxidized [2Fe-2S]-[ferredoxin] = oxidized [plastocyanin] + reduced [2Fe-2S]-[ferredoxin]</text>
        <dbReference type="Rhea" id="RHEA:30407"/>
        <dbReference type="Rhea" id="RHEA-COMP:10000"/>
        <dbReference type="Rhea" id="RHEA-COMP:10001"/>
        <dbReference type="Rhea" id="RHEA-COMP:10039"/>
        <dbReference type="Rhea" id="RHEA-COMP:10040"/>
        <dbReference type="ChEBI" id="CHEBI:29036"/>
        <dbReference type="ChEBI" id="CHEBI:30212"/>
        <dbReference type="ChEBI" id="CHEBI:33737"/>
        <dbReference type="ChEBI" id="CHEBI:33738"/>
        <dbReference type="ChEBI" id="CHEBI:49552"/>
        <dbReference type="EC" id="1.97.1.12"/>
    </reaction>
</comment>
<comment type="cofactor">
    <cofactor evidence="2">
        <name>[4Fe-4S] cluster</name>
        <dbReference type="ChEBI" id="CHEBI:49883"/>
    </cofactor>
    <text evidence="2">Binds 2 [4Fe-4S] clusters. Cluster 2 is most probably the spectroscopically characterized electron acceptor FA and cluster 1 is most probably FB.</text>
</comment>
<comment type="subunit">
    <text evidence="2">The eukaryotic PSI reaction center is composed of at least 11 subunits.</text>
</comment>
<comment type="subcellular location">
    <subcellularLocation>
        <location evidence="2">Plastid</location>
        <location evidence="2">Chloroplast thylakoid membrane</location>
        <topology evidence="2">Peripheral membrane protein</topology>
        <orientation evidence="2">Stromal side</orientation>
    </subcellularLocation>
</comment>
<protein>
    <recommendedName>
        <fullName evidence="2">Photosystem I iron-sulfur center</fullName>
        <ecNumber evidence="2">1.97.1.12</ecNumber>
    </recommendedName>
    <alternativeName>
        <fullName evidence="2">9 kDa polypeptide</fullName>
    </alternativeName>
    <alternativeName>
        <fullName evidence="2">PSI-C</fullName>
    </alternativeName>
    <alternativeName>
        <fullName evidence="2">Photosystem I subunit VII</fullName>
    </alternativeName>
    <alternativeName>
        <fullName evidence="2">PsaC</fullName>
    </alternativeName>
</protein>
<proteinExistence type="evidence at protein level"/>
<organism>
    <name type="scientific">Ostreococcus tauri</name>
    <dbReference type="NCBI Taxonomy" id="70448"/>
    <lineage>
        <taxon>Eukaryota</taxon>
        <taxon>Viridiplantae</taxon>
        <taxon>Chlorophyta</taxon>
        <taxon>Mamiellophyceae</taxon>
        <taxon>Mamiellales</taxon>
        <taxon>Bathycoccaceae</taxon>
        <taxon>Ostreococcus</taxon>
    </lineage>
</organism>
<accession>Q0P3P1</accession>